<protein>
    <recommendedName>
        <fullName evidence="1">Uronate isomerase</fullName>
        <ecNumber evidence="1">5.3.1.12</ecNumber>
    </recommendedName>
    <alternativeName>
        <fullName evidence="1">Glucuronate isomerase</fullName>
    </alternativeName>
    <alternativeName>
        <fullName evidence="1">Uronic isomerase</fullName>
    </alternativeName>
</protein>
<comment type="catalytic activity">
    <reaction evidence="1">
        <text>D-glucuronate = D-fructuronate</text>
        <dbReference type="Rhea" id="RHEA:13049"/>
        <dbReference type="ChEBI" id="CHEBI:58720"/>
        <dbReference type="ChEBI" id="CHEBI:59863"/>
        <dbReference type="EC" id="5.3.1.12"/>
    </reaction>
</comment>
<comment type="catalytic activity">
    <reaction evidence="1">
        <text>aldehydo-D-galacturonate = keto-D-tagaturonate</text>
        <dbReference type="Rhea" id="RHEA:27702"/>
        <dbReference type="ChEBI" id="CHEBI:12952"/>
        <dbReference type="ChEBI" id="CHEBI:17886"/>
        <dbReference type="EC" id="5.3.1.12"/>
    </reaction>
</comment>
<comment type="pathway">
    <text evidence="1">Carbohydrate metabolism; pentose and glucuronate interconversion.</text>
</comment>
<comment type="similarity">
    <text evidence="1">Belongs to the metallo-dependent hydrolases superfamily. Uronate isomerase family.</text>
</comment>
<gene>
    <name evidence="1" type="primary">uxaC</name>
    <name type="ordered locus">XOO4170</name>
</gene>
<accession>Q2NXQ2</accession>
<feature type="chain" id="PRO_1000131615" description="Uronate isomerase">
    <location>
        <begin position="1"/>
        <end position="472"/>
    </location>
</feature>
<dbReference type="EC" id="5.3.1.12" evidence="1"/>
<dbReference type="EMBL" id="AP008229">
    <property type="protein sequence ID" value="BAE70925.1"/>
    <property type="molecule type" value="Genomic_DNA"/>
</dbReference>
<dbReference type="RefSeq" id="WP_011260712.1">
    <property type="nucleotide sequence ID" value="NC_007705.1"/>
</dbReference>
<dbReference type="SMR" id="Q2NXQ2"/>
<dbReference type="KEGG" id="xom:XOO4170"/>
<dbReference type="HOGENOM" id="CLU_044465_0_0_6"/>
<dbReference type="UniPathway" id="UPA00246"/>
<dbReference type="GO" id="GO:0008880">
    <property type="term" value="F:glucuronate isomerase activity"/>
    <property type="evidence" value="ECO:0007669"/>
    <property type="project" value="UniProtKB-UniRule"/>
</dbReference>
<dbReference type="GO" id="GO:0019698">
    <property type="term" value="P:D-galacturonate catabolic process"/>
    <property type="evidence" value="ECO:0007669"/>
    <property type="project" value="TreeGrafter"/>
</dbReference>
<dbReference type="GO" id="GO:0042840">
    <property type="term" value="P:D-glucuronate catabolic process"/>
    <property type="evidence" value="ECO:0007669"/>
    <property type="project" value="TreeGrafter"/>
</dbReference>
<dbReference type="Gene3D" id="3.20.20.140">
    <property type="entry name" value="Metal-dependent hydrolases"/>
    <property type="match status" value="1"/>
</dbReference>
<dbReference type="Gene3D" id="1.10.2020.10">
    <property type="entry name" value="uronate isomerase, domain 2, chain A"/>
    <property type="match status" value="1"/>
</dbReference>
<dbReference type="HAMAP" id="MF_00675">
    <property type="entry name" value="UxaC"/>
    <property type="match status" value="1"/>
</dbReference>
<dbReference type="InterPro" id="IPR032466">
    <property type="entry name" value="Metal_Hydrolase"/>
</dbReference>
<dbReference type="InterPro" id="IPR003766">
    <property type="entry name" value="Uronate_isomerase"/>
</dbReference>
<dbReference type="NCBIfam" id="NF002794">
    <property type="entry name" value="PRK02925.1"/>
    <property type="match status" value="1"/>
</dbReference>
<dbReference type="PANTHER" id="PTHR30068">
    <property type="entry name" value="URONATE ISOMERASE"/>
    <property type="match status" value="1"/>
</dbReference>
<dbReference type="PANTHER" id="PTHR30068:SF4">
    <property type="entry name" value="URONATE ISOMERASE"/>
    <property type="match status" value="1"/>
</dbReference>
<dbReference type="Pfam" id="PF02614">
    <property type="entry name" value="UxaC"/>
    <property type="match status" value="1"/>
</dbReference>
<dbReference type="SUPFAM" id="SSF51556">
    <property type="entry name" value="Metallo-dependent hydrolases"/>
    <property type="match status" value="1"/>
</dbReference>
<name>UXAC_XANOM</name>
<organism>
    <name type="scientific">Xanthomonas oryzae pv. oryzae (strain MAFF 311018)</name>
    <dbReference type="NCBI Taxonomy" id="342109"/>
    <lineage>
        <taxon>Bacteria</taxon>
        <taxon>Pseudomonadati</taxon>
        <taxon>Pseudomonadota</taxon>
        <taxon>Gammaproteobacteria</taxon>
        <taxon>Lysobacterales</taxon>
        <taxon>Lysobacteraceae</taxon>
        <taxon>Xanthomonas</taxon>
    </lineage>
</organism>
<sequence>MRSSVLSLHPDRLLPADPGTRAIAGRLYAQIATLPIISPHGHTDPAWFATNAPFADATELLLVPDHYVFRMLYSQGIDLDAIGIPRADGMRAAVDPRAAWRVFAAHYTVLRGTPSALWLNHVFHDVFDLRLRLDAGTADHYYDHITAALQTPDFLPRALFERFNIEVIATTESPLDPLHHHAAIAASGWQGRVVTAYRPDPVVDPEHAQFAGALQQFGALTGEDVLTWNGYLRAHRQRRAFFAAHGATSTDHGHPSAATADLSPAQAQRLFDTVVRGAATPEQAELFRAQVLTEMAAMSLDDGLVMQLHPGCFRNHNRPLFERYGRDKGADIPMRTDYVHALKPLLDRYGNDPRLRLIVFTLDETSYSRELAPLAGHYPSLLLGPAWWFHDAPEGMWRFREQTLASAGFYNTVGFNDDTRAFLSIPARHDVARRVDSAFLAKLVAEHRLEEDEATEVAIDLAYRMPKRAYNL</sequence>
<keyword id="KW-0413">Isomerase</keyword>
<evidence type="ECO:0000255" key="1">
    <source>
        <dbReference type="HAMAP-Rule" id="MF_00675"/>
    </source>
</evidence>
<proteinExistence type="inferred from homology"/>
<reference key="1">
    <citation type="journal article" date="2005" name="Jpn. Agric. Res. Q.">
        <title>Genome sequence of Xanthomonas oryzae pv. oryzae suggests contribution of large numbers of effector genes and insertion sequences to its race diversity.</title>
        <authorList>
            <person name="Ochiai H."/>
            <person name="Inoue Y."/>
            <person name="Takeya M."/>
            <person name="Sasaki A."/>
            <person name="Kaku H."/>
        </authorList>
    </citation>
    <scope>NUCLEOTIDE SEQUENCE [LARGE SCALE GENOMIC DNA]</scope>
    <source>
        <strain>MAFF 311018</strain>
    </source>
</reference>